<reference key="1">
    <citation type="journal article" date="2002" name="Nat. Genet.">
        <title>Adaptive evolution of a duplicated pancreatic ribonuclease gene in a leaf-eating monkey.</title>
        <authorList>
            <person name="Zhang J."/>
            <person name="Zhang Y.-P."/>
            <person name="Rosenberg H.F."/>
        </authorList>
    </citation>
    <scope>NUCLEOTIDE SEQUENCE [GENOMIC DNA]</scope>
</reference>
<comment type="function">
    <text evidence="1">Endonuclease that catalyzes the cleavage of RNA on the 3' side of pyrimidine nucleotides. Acts on single-stranded and double-stranded RNA (By similarity).</text>
</comment>
<comment type="catalytic activity">
    <reaction>
        <text>an [RNA] containing cytidine + H2O = an [RNA]-3'-cytidine-3'-phosphate + a 5'-hydroxy-ribonucleotide-3'-[RNA].</text>
        <dbReference type="EC" id="4.6.1.18"/>
    </reaction>
</comment>
<comment type="catalytic activity">
    <reaction>
        <text>an [RNA] containing uridine + H2O = an [RNA]-3'-uridine-3'-phosphate + a 5'-hydroxy-ribonucleotide-3'-[RNA].</text>
        <dbReference type="EC" id="4.6.1.18"/>
    </reaction>
</comment>
<comment type="subunit">
    <text evidence="1">Monomer. Interacts with and forms tight 1:1 complexes with RNH1. Dimerization of two such complexes may occur. Interaction with RNH1 inhibits this protein (By similarity).</text>
</comment>
<comment type="subcellular location">
    <subcellularLocation>
        <location evidence="1">Secreted</location>
    </subcellularLocation>
</comment>
<comment type="similarity">
    <text evidence="4">Belongs to the pancreatic ribonuclease family.</text>
</comment>
<gene>
    <name type="primary">RNASE1</name>
    <name type="synonym">RNS1</name>
</gene>
<organism>
    <name type="scientific">Gorilla gorilla gorilla</name>
    <name type="common">Western lowland gorilla</name>
    <dbReference type="NCBI Taxonomy" id="9595"/>
    <lineage>
        <taxon>Eukaryota</taxon>
        <taxon>Metazoa</taxon>
        <taxon>Chordata</taxon>
        <taxon>Craniata</taxon>
        <taxon>Vertebrata</taxon>
        <taxon>Euteleostomi</taxon>
        <taxon>Mammalia</taxon>
        <taxon>Eutheria</taxon>
        <taxon>Euarchontoglires</taxon>
        <taxon>Primates</taxon>
        <taxon>Haplorrhini</taxon>
        <taxon>Catarrhini</taxon>
        <taxon>Hominidae</taxon>
        <taxon>Gorilla</taxon>
    </lineage>
</organism>
<dbReference type="EC" id="4.6.1.18"/>
<dbReference type="EMBL" id="AF449629">
    <property type="protein sequence ID" value="AAL87050.1"/>
    <property type="molecule type" value="Genomic_DNA"/>
</dbReference>
<dbReference type="RefSeq" id="XP_004054900.1">
    <property type="nucleotide sequence ID" value="XM_004054852.4"/>
</dbReference>
<dbReference type="RefSeq" id="XP_004054903.1">
    <property type="nucleotide sequence ID" value="XM_004054855.5"/>
</dbReference>
<dbReference type="RefSeq" id="XP_018865701.1">
    <property type="nucleotide sequence ID" value="XM_019010156.3"/>
</dbReference>
<dbReference type="RefSeq" id="XP_018865702.1">
    <property type="nucleotide sequence ID" value="XM_019010157.3"/>
</dbReference>
<dbReference type="RefSeq" id="XP_018865703.1">
    <property type="nucleotide sequence ID" value="XM_019010158.3"/>
</dbReference>
<dbReference type="RefSeq" id="XP_018865704.1">
    <property type="nucleotide sequence ID" value="XM_019010159.4"/>
</dbReference>
<dbReference type="RefSeq" id="XP_055218438.1">
    <property type="nucleotide sequence ID" value="XM_055362463.2"/>
</dbReference>
<dbReference type="BMRB" id="Q8SQ13"/>
<dbReference type="SMR" id="Q8SQ13"/>
<dbReference type="FunCoup" id="Q8SQ13">
    <property type="interactions" value="62"/>
</dbReference>
<dbReference type="STRING" id="9593.ENSGGOP00000002737"/>
<dbReference type="GlyCosmos" id="Q8SQ13">
    <property type="glycosylation" value="4 sites, No reported glycans"/>
</dbReference>
<dbReference type="Ensembl" id="ENSGGOT00000002795.3">
    <property type="protein sequence ID" value="ENSGGOP00000002737.2"/>
    <property type="gene ID" value="ENSGGOG00000002779.3"/>
</dbReference>
<dbReference type="GeneID" id="101145521"/>
<dbReference type="KEGG" id="ggo:101145521"/>
<dbReference type="CTD" id="6035"/>
<dbReference type="eggNOG" id="ENOG502SQ4K">
    <property type="taxonomic scope" value="Eukaryota"/>
</dbReference>
<dbReference type="GeneTree" id="ENSGT00940000160869"/>
<dbReference type="HOGENOM" id="CLU_117006_0_0_1"/>
<dbReference type="InParanoid" id="Q8SQ13"/>
<dbReference type="OMA" id="CVQPSLG"/>
<dbReference type="Proteomes" id="UP000001519">
    <property type="component" value="Chromosome 14"/>
</dbReference>
<dbReference type="Bgee" id="ENSGGOG00000002779">
    <property type="expression patterns" value="Expressed in heart and 6 other cell types or tissues"/>
</dbReference>
<dbReference type="GO" id="GO:0005576">
    <property type="term" value="C:extracellular region"/>
    <property type="evidence" value="ECO:0007669"/>
    <property type="project" value="UniProtKB-SubCell"/>
</dbReference>
<dbReference type="GO" id="GO:0016829">
    <property type="term" value="F:lyase activity"/>
    <property type="evidence" value="ECO:0007669"/>
    <property type="project" value="UniProtKB-KW"/>
</dbReference>
<dbReference type="GO" id="GO:0003676">
    <property type="term" value="F:nucleic acid binding"/>
    <property type="evidence" value="ECO:0007669"/>
    <property type="project" value="InterPro"/>
</dbReference>
<dbReference type="GO" id="GO:0004522">
    <property type="term" value="F:ribonuclease A activity"/>
    <property type="evidence" value="ECO:0007669"/>
    <property type="project" value="UniProtKB-EC"/>
</dbReference>
<dbReference type="GO" id="GO:0004540">
    <property type="term" value="F:RNA nuclease activity"/>
    <property type="evidence" value="ECO:0000318"/>
    <property type="project" value="GO_Central"/>
</dbReference>
<dbReference type="GO" id="GO:0050830">
    <property type="term" value="P:defense response to Gram-positive bacterium"/>
    <property type="evidence" value="ECO:0000318"/>
    <property type="project" value="GO_Central"/>
</dbReference>
<dbReference type="CDD" id="cd06265">
    <property type="entry name" value="RNase_A_canonical"/>
    <property type="match status" value="1"/>
</dbReference>
<dbReference type="FunFam" id="3.10.130.10:FF:000001">
    <property type="entry name" value="Ribonuclease pancreatic"/>
    <property type="match status" value="1"/>
</dbReference>
<dbReference type="Gene3D" id="3.10.130.10">
    <property type="entry name" value="Ribonuclease A-like domain"/>
    <property type="match status" value="1"/>
</dbReference>
<dbReference type="InterPro" id="IPR001427">
    <property type="entry name" value="RNaseA"/>
</dbReference>
<dbReference type="InterPro" id="IPR036816">
    <property type="entry name" value="RNaseA-like_dom_sf"/>
</dbReference>
<dbReference type="InterPro" id="IPR023411">
    <property type="entry name" value="RNaseA_AS"/>
</dbReference>
<dbReference type="InterPro" id="IPR023412">
    <property type="entry name" value="RNaseA_domain"/>
</dbReference>
<dbReference type="PANTHER" id="PTHR11437">
    <property type="entry name" value="RIBONUCLEASE"/>
    <property type="match status" value="1"/>
</dbReference>
<dbReference type="PANTHER" id="PTHR11437:SF24">
    <property type="entry name" value="RIBONUCLEASE PANCREATIC"/>
    <property type="match status" value="1"/>
</dbReference>
<dbReference type="Pfam" id="PF00074">
    <property type="entry name" value="RnaseA"/>
    <property type="match status" value="1"/>
</dbReference>
<dbReference type="PRINTS" id="PR00794">
    <property type="entry name" value="RIBONUCLEASE"/>
</dbReference>
<dbReference type="SMART" id="SM00092">
    <property type="entry name" value="RNAse_Pc"/>
    <property type="match status" value="1"/>
</dbReference>
<dbReference type="SUPFAM" id="SSF54076">
    <property type="entry name" value="RNase A-like"/>
    <property type="match status" value="1"/>
</dbReference>
<dbReference type="PROSITE" id="PS00127">
    <property type="entry name" value="RNASE_PANCREATIC"/>
    <property type="match status" value="1"/>
</dbReference>
<name>RNAS1_GORGO</name>
<feature type="signal peptide" evidence="1">
    <location>
        <begin position="1"/>
        <end position="28"/>
    </location>
</feature>
<feature type="chain" id="PRO_0000030920" description="Ribonuclease pancreatic">
    <location>
        <begin position="29"/>
        <end position="156"/>
    </location>
</feature>
<feature type="region of interest" description="Disordered" evidence="3">
    <location>
        <begin position="33"/>
        <end position="52"/>
    </location>
</feature>
<feature type="compositionally biased region" description="Basic and acidic residues" evidence="3">
    <location>
        <begin position="33"/>
        <end position="43"/>
    </location>
</feature>
<feature type="active site" description="Proton acceptor" evidence="1">
    <location>
        <position position="40"/>
    </location>
</feature>
<feature type="active site" description="Proton donor" evidence="1">
    <location>
        <position position="147"/>
    </location>
</feature>
<feature type="binding site" evidence="1">
    <location>
        <position position="35"/>
    </location>
    <ligand>
        <name>substrate</name>
    </ligand>
</feature>
<feature type="binding site" evidence="1">
    <location>
        <position position="38"/>
    </location>
    <ligand>
        <name>substrate</name>
    </ligand>
</feature>
<feature type="binding site" evidence="1">
    <location>
        <begin position="69"/>
        <end position="73"/>
    </location>
    <ligand>
        <name>substrate</name>
    </ligand>
</feature>
<feature type="binding site" evidence="1">
    <location>
        <position position="94"/>
    </location>
    <ligand>
        <name>substrate</name>
    </ligand>
</feature>
<feature type="binding site" evidence="1">
    <location>
        <position position="113"/>
    </location>
    <ligand>
        <name>substrate</name>
    </ligand>
</feature>
<feature type="glycosylation site" description="N-linked (GlcNAc...) asparagine" evidence="2">
    <location>
        <position position="50"/>
    </location>
</feature>
<feature type="glycosylation site" description="N-linked (GlcNAc...) asparagine" evidence="2">
    <location>
        <position position="62"/>
    </location>
</feature>
<feature type="glycosylation site" description="N-linked (GlcNAc...) asparagine" evidence="2">
    <location>
        <position position="104"/>
    </location>
</feature>
<feature type="glycosylation site" description="N-linked (GlcNAc...) asparagine" evidence="2">
    <location>
        <position position="116"/>
    </location>
</feature>
<feature type="disulfide bond" evidence="1">
    <location>
        <begin position="54"/>
        <end position="112"/>
    </location>
</feature>
<feature type="disulfide bond" evidence="1">
    <location>
        <begin position="68"/>
        <end position="123"/>
    </location>
</feature>
<feature type="disulfide bond" evidence="1">
    <location>
        <begin position="86"/>
        <end position="138"/>
    </location>
</feature>
<feature type="disulfide bond" evidence="1">
    <location>
        <begin position="93"/>
        <end position="100"/>
    </location>
</feature>
<keyword id="KW-1015">Disulfide bond</keyword>
<keyword id="KW-0255">Endonuclease</keyword>
<keyword id="KW-0325">Glycoprotein</keyword>
<keyword id="KW-0378">Hydrolase</keyword>
<keyword id="KW-0456">Lyase</keyword>
<keyword id="KW-0540">Nuclease</keyword>
<keyword id="KW-1185">Reference proteome</keyword>
<keyword id="KW-0964">Secreted</keyword>
<keyword id="KW-0732">Signal</keyword>
<proteinExistence type="inferred from homology"/>
<sequence>MALEKSLVLLPLLVLILLVLGWVQPSLGKESRAKKFQRQHMDSDSSPSSNSTYCNQMMRRRNMTQGRCKPVNTFVHEPLVDVQNVCFQEKVTCKNGQGNCYKSNSSMHITDCRLTNGSRYPNCAYRTSPKERHIIVACEGNPYVPVHFDASVEDST</sequence>
<accession>Q8SQ13</accession>
<protein>
    <recommendedName>
        <fullName>Ribonuclease pancreatic</fullName>
        <ecNumber>4.6.1.18</ecNumber>
    </recommendedName>
    <alternativeName>
        <fullName>RNase 1</fullName>
    </alternativeName>
    <alternativeName>
        <fullName>RNase A</fullName>
    </alternativeName>
</protein>
<evidence type="ECO:0000250" key="1"/>
<evidence type="ECO:0000255" key="2"/>
<evidence type="ECO:0000256" key="3">
    <source>
        <dbReference type="SAM" id="MobiDB-lite"/>
    </source>
</evidence>
<evidence type="ECO:0000305" key="4"/>